<name>PGLRX_ASPNG</name>
<comment type="function">
    <text evidence="5">Specific in hydrolyzing the terminal glycosidic bond of polygalacturonic acid and oligogalacturonates.</text>
</comment>
<comment type="catalytic activity">
    <reaction>
        <text>[(1-&gt;4)-alpha-D-galacturonosyl](n) + H2O = alpha-D-galacturonate + [(1-&gt;4)-alpha-D-galacturonosyl](n-1)</text>
        <dbReference type="Rhea" id="RHEA:14117"/>
        <dbReference type="Rhea" id="RHEA-COMP:14570"/>
        <dbReference type="Rhea" id="RHEA-COMP:14572"/>
        <dbReference type="ChEBI" id="CHEBI:15377"/>
        <dbReference type="ChEBI" id="CHEBI:58658"/>
        <dbReference type="ChEBI" id="CHEBI:140523"/>
        <dbReference type="EC" id="3.2.1.67"/>
    </reaction>
</comment>
<comment type="subcellular location">
    <subcellularLocation>
        <location evidence="1">Secreted</location>
    </subcellularLocation>
</comment>
<comment type="similarity">
    <text evidence="6">Belongs to the glycosyl hydrolase 28 family.</text>
</comment>
<reference key="1">
    <citation type="journal article" date="2006" name="Biochem. J.">
        <title>A new group of exo-acting family 28 glycoside hydrolases of Aspergillus niger that are involved in pectin degradation.</title>
        <authorList>
            <person name="Martens-Uzunova E.S."/>
            <person name="Zandleven J.S."/>
            <person name="Benen J.A."/>
            <person name="Awad H."/>
            <person name="Kools H.J."/>
            <person name="Beldman G."/>
            <person name="Voragen A.G."/>
            <person name="Van den Berg J.A."/>
            <person name="Schaap P.J."/>
        </authorList>
    </citation>
    <scope>NUCLEOTIDE SEQUENCE [GENOMIC DNA]</scope>
    <scope>FUNCTION</scope>
    <source>
        <strain>CBS 513.88</strain>
    </source>
</reference>
<dbReference type="EC" id="3.2.1.67"/>
<dbReference type="EMBL" id="DQ374422">
    <property type="protein sequence ID" value="ABD61562.1"/>
    <property type="molecule type" value="Genomic_DNA"/>
</dbReference>
<dbReference type="RefSeq" id="XP_001395799.1">
    <property type="nucleotide sequence ID" value="XM_001395762.1"/>
</dbReference>
<dbReference type="SMR" id="Q27UB3"/>
<dbReference type="GlyCosmos" id="Q27UB3">
    <property type="glycosylation" value="12 sites, No reported glycans"/>
</dbReference>
<dbReference type="PaxDb" id="5061-CADANGAP00009981"/>
<dbReference type="EnsemblFungi" id="CAK46374">
    <property type="protein sequence ID" value="CAK46374"/>
    <property type="gene ID" value="An12g07500"/>
</dbReference>
<dbReference type="GeneID" id="4986099"/>
<dbReference type="KEGG" id="ang:An12g07500"/>
<dbReference type="VEuPathDB" id="FungiDB:An12g07500"/>
<dbReference type="VEuPathDB" id="FungiDB:ASPNIDRAFT2_1183154"/>
<dbReference type="VEuPathDB" id="FungiDB:ATCC64974_35510"/>
<dbReference type="VEuPathDB" id="FungiDB:M747DRAFT_330257"/>
<dbReference type="eggNOG" id="ENOG502QPPR">
    <property type="taxonomic scope" value="Eukaryota"/>
</dbReference>
<dbReference type="OrthoDB" id="187139at2759"/>
<dbReference type="GO" id="GO:0005576">
    <property type="term" value="C:extracellular region"/>
    <property type="evidence" value="ECO:0007669"/>
    <property type="project" value="UniProtKB-SubCell"/>
</dbReference>
<dbReference type="GO" id="GO:0047911">
    <property type="term" value="F:galacturan 1,4-alpha-galacturonidase activity"/>
    <property type="evidence" value="ECO:0007669"/>
    <property type="project" value="UniProtKB-EC"/>
</dbReference>
<dbReference type="GO" id="GO:0004650">
    <property type="term" value="F:polygalacturonase activity"/>
    <property type="evidence" value="ECO:0007669"/>
    <property type="project" value="InterPro"/>
</dbReference>
<dbReference type="GO" id="GO:0005975">
    <property type="term" value="P:carbohydrate metabolic process"/>
    <property type="evidence" value="ECO:0007669"/>
    <property type="project" value="InterPro"/>
</dbReference>
<dbReference type="GO" id="GO:0071555">
    <property type="term" value="P:cell wall organization"/>
    <property type="evidence" value="ECO:0007669"/>
    <property type="project" value="UniProtKB-KW"/>
</dbReference>
<dbReference type="FunFam" id="2.160.20.10:FF:000027">
    <property type="entry name" value="Probable exopolygalacturonase X"/>
    <property type="match status" value="1"/>
</dbReference>
<dbReference type="Gene3D" id="2.160.20.10">
    <property type="entry name" value="Single-stranded right-handed beta-helix, Pectin lyase-like"/>
    <property type="match status" value="1"/>
</dbReference>
<dbReference type="InterPro" id="IPR000743">
    <property type="entry name" value="Glyco_hydro_28"/>
</dbReference>
<dbReference type="InterPro" id="IPR012334">
    <property type="entry name" value="Pectin_lyas_fold"/>
</dbReference>
<dbReference type="InterPro" id="IPR011050">
    <property type="entry name" value="Pectin_lyase_fold/virulence"/>
</dbReference>
<dbReference type="PANTHER" id="PTHR31736">
    <property type="match status" value="1"/>
</dbReference>
<dbReference type="PANTHER" id="PTHR31736:SF14">
    <property type="entry name" value="EXOPOLYGALACTURONASE X-1-RELATED"/>
    <property type="match status" value="1"/>
</dbReference>
<dbReference type="Pfam" id="PF00295">
    <property type="entry name" value="Glyco_hydro_28"/>
    <property type="match status" value="1"/>
</dbReference>
<dbReference type="SUPFAM" id="SSF51126">
    <property type="entry name" value="Pectin lyase-like"/>
    <property type="match status" value="1"/>
</dbReference>
<dbReference type="PROSITE" id="PS00502">
    <property type="entry name" value="POLYGALACTURONASE"/>
    <property type="match status" value="1"/>
</dbReference>
<proteinExistence type="inferred from homology"/>
<keyword id="KW-0961">Cell wall biogenesis/degradation</keyword>
<keyword id="KW-1015">Disulfide bond</keyword>
<keyword id="KW-0325">Glycoprotein</keyword>
<keyword id="KW-0326">Glycosidase</keyword>
<keyword id="KW-0378">Hydrolase</keyword>
<keyword id="KW-0677">Repeat</keyword>
<keyword id="KW-0964">Secreted</keyword>
<keyword id="KW-0732">Signal</keyword>
<gene>
    <name type="primary">pgaX</name>
    <name type="ORF">An12g07500</name>
</gene>
<sequence length="435" mass="47294">MRLTHVLSHTLGLLALGATAEAFSRSREAACSPKKPFRPLPTSSSRDKTCHVRSHGDGSDDSDYILSALHQCNHGGKVVFDEDKEYIIGTALNMTFLKNIDLEVLGTILFTNDTDYWQANSFKQGFQNATTFFQLGGEDVNMYGGGTINGNGQVWYDLYAEDDLILRPILMGIIGLNGGTIGPLKLRYSPQYYHFVANSSNVLFDGIDISGYSKSDNEAKNTDGWDTYRSNNIVIQNSVINNGDDCVSFKPNSTNILVQNLHCNGSHGISVGSLGQYKDEVDIVENVYVYNISMFNASDMARIKVWPGTPSALSADLQGGGGSGSVKNITYDTALIDNVDWAIEITQCYGQKNTTLCNEYPSSLTISDVHIKNFRGTTSGSEDPYVGTIVCSSPDTCSDIYTSNINVTSPDGTNDFVCDNVDESLLSVNCTATSD</sequence>
<accession>Q27UB3</accession>
<protein>
    <recommendedName>
        <fullName>Exopolygalacturonase X</fullName>
        <shortName>ExoPG</shortName>
        <ecNumber>3.2.1.67</ecNumber>
    </recommendedName>
    <alternativeName>
        <fullName>Galacturan 1,4-alpha-galacturonidase</fullName>
    </alternativeName>
    <alternativeName>
        <fullName>Poly(1,4-alpha-D-galacturonide)galacturonohydrolase</fullName>
    </alternativeName>
</protein>
<feature type="signal peptide" evidence="2">
    <location>
        <begin position="1"/>
        <end position="22"/>
    </location>
</feature>
<feature type="chain" id="PRO_0000393669" description="Exopolygalacturonase X">
    <location>
        <begin position="23"/>
        <end position="435"/>
    </location>
</feature>
<feature type="repeat" description="PbH1 1">
    <location>
        <begin position="199"/>
        <end position="229"/>
    </location>
</feature>
<feature type="repeat" description="PbH1 2">
    <location>
        <begin position="230"/>
        <end position="251"/>
    </location>
</feature>
<feature type="repeat" description="PbH1 3">
    <location>
        <begin position="253"/>
        <end position="273"/>
    </location>
</feature>
<feature type="repeat" description="PbH1 4">
    <location>
        <begin position="326"/>
        <end position="347"/>
    </location>
</feature>
<feature type="repeat" description="PbH1 5">
    <location>
        <begin position="361"/>
        <end position="409"/>
    </location>
</feature>
<feature type="region of interest" description="Disordered" evidence="4">
    <location>
        <begin position="31"/>
        <end position="55"/>
    </location>
</feature>
<feature type="compositionally biased region" description="Basic and acidic residues" evidence="4">
    <location>
        <begin position="45"/>
        <end position="55"/>
    </location>
</feature>
<feature type="active site" description="Proton donor" evidence="3">
    <location>
        <position position="244"/>
    </location>
</feature>
<feature type="active site" evidence="3">
    <location>
        <position position="267"/>
    </location>
</feature>
<feature type="glycosylation site" description="N-linked (GlcNAc...) asparagine" evidence="2">
    <location>
        <position position="93"/>
    </location>
</feature>
<feature type="glycosylation site" description="N-linked (GlcNAc...) asparagine" evidence="2">
    <location>
        <position position="112"/>
    </location>
</feature>
<feature type="glycosylation site" description="N-linked (GlcNAc...) asparagine" evidence="2">
    <location>
        <position position="128"/>
    </location>
</feature>
<feature type="glycosylation site" description="N-linked (GlcNAc...) asparagine" evidence="2">
    <location>
        <position position="198"/>
    </location>
</feature>
<feature type="glycosylation site" description="N-linked (GlcNAc...) asparagine" evidence="2">
    <location>
        <position position="252"/>
    </location>
</feature>
<feature type="glycosylation site" description="N-linked (GlcNAc...) asparagine" evidence="2">
    <location>
        <position position="264"/>
    </location>
</feature>
<feature type="glycosylation site" description="N-linked (GlcNAc...) asparagine" evidence="2">
    <location>
        <position position="291"/>
    </location>
</feature>
<feature type="glycosylation site" description="N-linked (GlcNAc...) asparagine" evidence="2">
    <location>
        <position position="296"/>
    </location>
</feature>
<feature type="glycosylation site" description="N-linked (GlcNAc...) asparagine" evidence="2">
    <location>
        <position position="328"/>
    </location>
</feature>
<feature type="glycosylation site" description="N-linked (GlcNAc...) asparagine" evidence="2">
    <location>
        <position position="353"/>
    </location>
</feature>
<feature type="glycosylation site" description="N-linked (GlcNAc...) asparagine" evidence="2">
    <location>
        <position position="406"/>
    </location>
</feature>
<feature type="glycosylation site" description="N-linked (GlcNAc...) asparagine" evidence="2">
    <location>
        <position position="429"/>
    </location>
</feature>
<feature type="disulfide bond" evidence="1">
    <location>
        <begin position="246"/>
        <end position="263"/>
    </location>
</feature>
<feature type="disulfide bond" evidence="1">
    <location>
        <begin position="391"/>
        <end position="397"/>
    </location>
</feature>
<evidence type="ECO:0000250" key="1"/>
<evidence type="ECO:0000255" key="2"/>
<evidence type="ECO:0000255" key="3">
    <source>
        <dbReference type="PROSITE-ProRule" id="PRU10052"/>
    </source>
</evidence>
<evidence type="ECO:0000256" key="4">
    <source>
        <dbReference type="SAM" id="MobiDB-lite"/>
    </source>
</evidence>
<evidence type="ECO:0000269" key="5">
    <source>
    </source>
</evidence>
<evidence type="ECO:0000305" key="6"/>
<organism>
    <name type="scientific">Aspergillus niger</name>
    <dbReference type="NCBI Taxonomy" id="5061"/>
    <lineage>
        <taxon>Eukaryota</taxon>
        <taxon>Fungi</taxon>
        <taxon>Dikarya</taxon>
        <taxon>Ascomycota</taxon>
        <taxon>Pezizomycotina</taxon>
        <taxon>Eurotiomycetes</taxon>
        <taxon>Eurotiomycetidae</taxon>
        <taxon>Eurotiales</taxon>
        <taxon>Aspergillaceae</taxon>
        <taxon>Aspergillus</taxon>
        <taxon>Aspergillus subgen. Circumdati</taxon>
    </lineage>
</organism>